<dbReference type="EMBL" id="AF031160">
    <property type="protein sequence ID" value="AAC35871.1"/>
    <property type="molecule type" value="Genomic_DNA"/>
</dbReference>
<dbReference type="RefSeq" id="WP_004028429.1">
    <property type="nucleotide sequence ID" value="NZ_CP096808.1"/>
</dbReference>
<dbReference type="SMR" id="O31162"/>
<dbReference type="STRING" id="2133.SCITRI_00338"/>
<dbReference type="GeneID" id="54238275"/>
<dbReference type="OrthoDB" id="9802589at2"/>
<dbReference type="GO" id="GO:0022625">
    <property type="term" value="C:cytosolic large ribosomal subunit"/>
    <property type="evidence" value="ECO:0007669"/>
    <property type="project" value="TreeGrafter"/>
</dbReference>
<dbReference type="GO" id="GO:0019843">
    <property type="term" value="F:rRNA binding"/>
    <property type="evidence" value="ECO:0007669"/>
    <property type="project" value="UniProtKB-UniRule"/>
</dbReference>
<dbReference type="GO" id="GO:0003735">
    <property type="term" value="F:structural constituent of ribosome"/>
    <property type="evidence" value="ECO:0007669"/>
    <property type="project" value="InterPro"/>
</dbReference>
<dbReference type="GO" id="GO:0000049">
    <property type="term" value="F:tRNA binding"/>
    <property type="evidence" value="ECO:0007669"/>
    <property type="project" value="UniProtKB-KW"/>
</dbReference>
<dbReference type="GO" id="GO:0006412">
    <property type="term" value="P:translation"/>
    <property type="evidence" value="ECO:0007669"/>
    <property type="project" value="UniProtKB-UniRule"/>
</dbReference>
<dbReference type="CDD" id="cd01433">
    <property type="entry name" value="Ribosomal_L16_L10e"/>
    <property type="match status" value="1"/>
</dbReference>
<dbReference type="FunFam" id="3.90.1170.10:FF:000001">
    <property type="entry name" value="50S ribosomal protein L16"/>
    <property type="match status" value="1"/>
</dbReference>
<dbReference type="Gene3D" id="3.90.1170.10">
    <property type="entry name" value="Ribosomal protein L10e/L16"/>
    <property type="match status" value="1"/>
</dbReference>
<dbReference type="HAMAP" id="MF_01342">
    <property type="entry name" value="Ribosomal_uL16"/>
    <property type="match status" value="1"/>
</dbReference>
<dbReference type="InterPro" id="IPR047873">
    <property type="entry name" value="Ribosomal_uL16"/>
</dbReference>
<dbReference type="InterPro" id="IPR000114">
    <property type="entry name" value="Ribosomal_uL16_bact-type"/>
</dbReference>
<dbReference type="InterPro" id="IPR020798">
    <property type="entry name" value="Ribosomal_uL16_CS"/>
</dbReference>
<dbReference type="InterPro" id="IPR016180">
    <property type="entry name" value="Ribosomal_uL16_dom"/>
</dbReference>
<dbReference type="InterPro" id="IPR036920">
    <property type="entry name" value="Ribosomal_uL16_sf"/>
</dbReference>
<dbReference type="NCBIfam" id="TIGR01164">
    <property type="entry name" value="rplP_bact"/>
    <property type="match status" value="1"/>
</dbReference>
<dbReference type="PANTHER" id="PTHR12220">
    <property type="entry name" value="50S/60S RIBOSOMAL PROTEIN L16"/>
    <property type="match status" value="1"/>
</dbReference>
<dbReference type="PANTHER" id="PTHR12220:SF13">
    <property type="entry name" value="LARGE RIBOSOMAL SUBUNIT PROTEIN UL16M"/>
    <property type="match status" value="1"/>
</dbReference>
<dbReference type="Pfam" id="PF00252">
    <property type="entry name" value="Ribosomal_L16"/>
    <property type="match status" value="1"/>
</dbReference>
<dbReference type="PRINTS" id="PR00060">
    <property type="entry name" value="RIBOSOMALL16"/>
</dbReference>
<dbReference type="SUPFAM" id="SSF54686">
    <property type="entry name" value="Ribosomal protein L16p/L10e"/>
    <property type="match status" value="1"/>
</dbReference>
<dbReference type="PROSITE" id="PS00586">
    <property type="entry name" value="RIBOSOMAL_L16_1"/>
    <property type="match status" value="1"/>
</dbReference>
<dbReference type="PROSITE" id="PS00701">
    <property type="entry name" value="RIBOSOMAL_L16_2"/>
    <property type="match status" value="1"/>
</dbReference>
<organism>
    <name type="scientific">Spiroplasma citri</name>
    <dbReference type="NCBI Taxonomy" id="2133"/>
    <lineage>
        <taxon>Bacteria</taxon>
        <taxon>Bacillati</taxon>
        <taxon>Mycoplasmatota</taxon>
        <taxon>Mollicutes</taxon>
        <taxon>Entomoplasmatales</taxon>
        <taxon>Spiroplasmataceae</taxon>
        <taxon>Spiroplasma</taxon>
    </lineage>
</organism>
<accession>O31162</accession>
<sequence>MLLPKRTKYRRPHRIKYEGKAKGNTKVDFGEFGLKSLDGAWITNRQIEAARIAMTRYMKRWGKVWIRIFPHMAKTKKPLEVRMGSGKGSPEEWVAVVKTGTVMFEVAGVSEETAREALRLAMHKLPVRCKIVKKGEE</sequence>
<protein>
    <recommendedName>
        <fullName evidence="1">Large ribosomal subunit protein uL16</fullName>
    </recommendedName>
    <alternativeName>
        <fullName evidence="2">50S ribosomal protein L16</fullName>
    </alternativeName>
</protein>
<gene>
    <name evidence="1" type="primary">rplP</name>
</gene>
<feature type="chain" id="PRO_0000062201" description="Large ribosomal subunit protein uL16">
    <location>
        <begin position="1"/>
        <end position="137"/>
    </location>
</feature>
<proteinExistence type="inferred from homology"/>
<name>RL16_SPICI</name>
<comment type="function">
    <text evidence="1">Binds 23S rRNA and is also seen to make contacts with the A and possibly P site tRNAs.</text>
</comment>
<comment type="subunit">
    <text evidence="1">Part of the 50S ribosomal subunit.</text>
</comment>
<comment type="similarity">
    <text evidence="1">Belongs to the universal ribosomal protein uL16 family.</text>
</comment>
<keyword id="KW-0687">Ribonucleoprotein</keyword>
<keyword id="KW-0689">Ribosomal protein</keyword>
<keyword id="KW-0694">RNA-binding</keyword>
<keyword id="KW-0699">rRNA-binding</keyword>
<keyword id="KW-0820">tRNA-binding</keyword>
<reference key="1">
    <citation type="journal article" date="1998" name="J. Biol. Chem.">
        <title>Purification, cloning, and preliminary characterization of a Spiroplasma citri ribosomal protein with DNA binding capacity.</title>
        <authorList>
            <person name="Le Dantec L."/>
            <person name="Castroviejo M."/>
            <person name="Bove J.M."/>
            <person name="Saillard C."/>
        </authorList>
    </citation>
    <scope>NUCLEOTIDE SEQUENCE [GENOMIC DNA]</scope>
    <source>
        <strain>ATCC 27556 / NCPPB 2647 / R8A2</strain>
    </source>
</reference>
<evidence type="ECO:0000255" key="1">
    <source>
        <dbReference type="HAMAP-Rule" id="MF_01342"/>
    </source>
</evidence>
<evidence type="ECO:0000305" key="2"/>